<organism>
    <name type="scientific">Zea mays</name>
    <name type="common">Maize</name>
    <dbReference type="NCBI Taxonomy" id="4577"/>
    <lineage>
        <taxon>Eukaryota</taxon>
        <taxon>Viridiplantae</taxon>
        <taxon>Streptophyta</taxon>
        <taxon>Embryophyta</taxon>
        <taxon>Tracheophyta</taxon>
        <taxon>Spermatophyta</taxon>
        <taxon>Magnoliopsida</taxon>
        <taxon>Liliopsida</taxon>
        <taxon>Poales</taxon>
        <taxon>Poaceae</taxon>
        <taxon>PACMAD clade</taxon>
        <taxon>Panicoideae</taxon>
        <taxon>Andropogonodae</taxon>
        <taxon>Andropogoneae</taxon>
        <taxon>Tripsacinae</taxon>
        <taxon>Zea</taxon>
    </lineage>
</organism>
<accession>Q06509</accession>
<accession>Q6VWG3</accession>
<dbReference type="EC" id="2.1.1.68" evidence="2"/>
<dbReference type="EC" id="2.1.1.175" evidence="5"/>
<dbReference type="EMBL" id="M73235">
    <property type="protein sequence ID" value="AAB03364.1"/>
    <property type="molecule type" value="Genomic_DNA"/>
</dbReference>
<dbReference type="EMBL" id="AY323275">
    <property type="protein sequence ID" value="AAQ24340.1"/>
    <property type="molecule type" value="Genomic_DNA"/>
</dbReference>
<dbReference type="EMBL" id="AY323276">
    <property type="protein sequence ID" value="AAQ24341.1"/>
    <property type="molecule type" value="Genomic_DNA"/>
</dbReference>
<dbReference type="EMBL" id="EF586877">
    <property type="protein sequence ID" value="ABQ58826.1"/>
    <property type="molecule type" value="mRNA"/>
</dbReference>
<dbReference type="EMBL" id="CM000780">
    <property type="protein sequence ID" value="AQK50725.1"/>
    <property type="molecule type" value="Genomic_DNA"/>
</dbReference>
<dbReference type="PIR" id="S28612">
    <property type="entry name" value="S28612"/>
</dbReference>
<dbReference type="RefSeq" id="NP_001106047.1">
    <property type="nucleotide sequence ID" value="NM_001112577.2"/>
</dbReference>
<dbReference type="SMR" id="Q06509"/>
<dbReference type="FunCoup" id="Q06509">
    <property type="interactions" value="952"/>
</dbReference>
<dbReference type="IntAct" id="Q06509">
    <property type="interactions" value="3"/>
</dbReference>
<dbReference type="STRING" id="4577.Q06509"/>
<dbReference type="PaxDb" id="4577-AC196475.3_FGP004"/>
<dbReference type="EnsemblPlants" id="Zm00001eb172420_T001">
    <property type="protein sequence ID" value="Zm00001eb172420_P001"/>
    <property type="gene ID" value="Zm00001eb172420"/>
</dbReference>
<dbReference type="GeneID" id="100125646"/>
<dbReference type="Gramene" id="Zm00001eb172420_T001">
    <property type="protein sequence ID" value="Zm00001eb172420_P001"/>
    <property type="gene ID" value="Zm00001eb172420"/>
</dbReference>
<dbReference type="KEGG" id="zma:100125646"/>
<dbReference type="MaizeGDB" id="26027"/>
<dbReference type="eggNOG" id="KOG3178">
    <property type="taxonomic scope" value="Eukaryota"/>
</dbReference>
<dbReference type="HOGENOM" id="CLU_005533_12_1_1"/>
<dbReference type="InParanoid" id="Q06509"/>
<dbReference type="OMA" id="LHDMIVY"/>
<dbReference type="OrthoDB" id="728759at2759"/>
<dbReference type="BRENDA" id="2.1.1.68">
    <property type="organism ID" value="6752"/>
</dbReference>
<dbReference type="UniPathway" id="UPA00711"/>
<dbReference type="Proteomes" id="UP000007305">
    <property type="component" value="Chromosome 4"/>
</dbReference>
<dbReference type="ExpressionAtlas" id="Q06509">
    <property type="expression patterns" value="baseline and differential"/>
</dbReference>
<dbReference type="GO" id="GO:0017096">
    <property type="term" value="F:acetylserotonin O-methyltransferase activity"/>
    <property type="evidence" value="ECO:0007669"/>
    <property type="project" value="EnsemblPlants"/>
</dbReference>
<dbReference type="GO" id="GO:0047763">
    <property type="term" value="F:caffeate O-methyltransferase activity"/>
    <property type="evidence" value="ECO:0007669"/>
    <property type="project" value="UniProtKB-EC"/>
</dbReference>
<dbReference type="GO" id="GO:0102822">
    <property type="term" value="F:flavone 3'-O-methyltransferase activity"/>
    <property type="evidence" value="ECO:0007669"/>
    <property type="project" value="EnsemblPlants"/>
</dbReference>
<dbReference type="GO" id="GO:0008171">
    <property type="term" value="F:O-methyltransferase activity"/>
    <property type="evidence" value="ECO:0000314"/>
    <property type="project" value="UniProtKB"/>
</dbReference>
<dbReference type="GO" id="GO:0046983">
    <property type="term" value="F:protein dimerization activity"/>
    <property type="evidence" value="ECO:0007669"/>
    <property type="project" value="InterPro"/>
</dbReference>
<dbReference type="GO" id="GO:0008757">
    <property type="term" value="F:S-adenosylmethionine-dependent methyltransferase activity"/>
    <property type="evidence" value="ECO:0000314"/>
    <property type="project" value="UniProtKB"/>
</dbReference>
<dbReference type="GO" id="GO:0102146">
    <property type="term" value="F:tricetin O-methytransferase activity"/>
    <property type="evidence" value="ECO:0007669"/>
    <property type="project" value="RHEA"/>
</dbReference>
<dbReference type="GO" id="GO:0009058">
    <property type="term" value="P:biosynthetic process"/>
    <property type="evidence" value="ECO:0000318"/>
    <property type="project" value="GO_Central"/>
</dbReference>
<dbReference type="GO" id="GO:0051555">
    <property type="term" value="P:flavonol biosynthetic process"/>
    <property type="evidence" value="ECO:0007669"/>
    <property type="project" value="EnsemblPlants"/>
</dbReference>
<dbReference type="GO" id="GO:0009809">
    <property type="term" value="P:lignin biosynthetic process"/>
    <property type="evidence" value="ECO:0000315"/>
    <property type="project" value="UniProtKB"/>
</dbReference>
<dbReference type="GO" id="GO:0030187">
    <property type="term" value="P:melatonin biosynthetic process"/>
    <property type="evidence" value="ECO:0007669"/>
    <property type="project" value="EnsemblPlants"/>
</dbReference>
<dbReference type="GO" id="GO:0032259">
    <property type="term" value="P:methylation"/>
    <property type="evidence" value="ECO:0000318"/>
    <property type="project" value="GO_Central"/>
</dbReference>
<dbReference type="GO" id="GO:0009611">
    <property type="term" value="P:response to wounding"/>
    <property type="evidence" value="ECO:0000270"/>
    <property type="project" value="UniProtKB"/>
</dbReference>
<dbReference type="GO" id="GO:0044550">
    <property type="term" value="P:secondary metabolite biosynthetic process"/>
    <property type="evidence" value="ECO:0000314"/>
    <property type="project" value="GO_Central"/>
</dbReference>
<dbReference type="CDD" id="cd02440">
    <property type="entry name" value="AdoMet_MTases"/>
    <property type="match status" value="1"/>
</dbReference>
<dbReference type="FunFam" id="1.10.10.10:FF:000473">
    <property type="entry name" value="Caffeic acid O-methyltransferase"/>
    <property type="match status" value="1"/>
</dbReference>
<dbReference type="FunFam" id="3.40.50.150:FF:000061">
    <property type="entry name" value="Caffeic acid O-methyltransferase"/>
    <property type="match status" value="1"/>
</dbReference>
<dbReference type="Gene3D" id="3.40.50.150">
    <property type="entry name" value="Vaccinia Virus protein VP39"/>
    <property type="match status" value="1"/>
</dbReference>
<dbReference type="Gene3D" id="1.10.10.10">
    <property type="entry name" value="Winged helix-like DNA-binding domain superfamily/Winged helix DNA-binding domain"/>
    <property type="match status" value="1"/>
</dbReference>
<dbReference type="InterPro" id="IPR016461">
    <property type="entry name" value="COMT-like"/>
</dbReference>
<dbReference type="InterPro" id="IPR022657">
    <property type="entry name" value="De-COase2_CS"/>
</dbReference>
<dbReference type="InterPro" id="IPR001077">
    <property type="entry name" value="O_MeTrfase_dom"/>
</dbReference>
<dbReference type="InterPro" id="IPR012967">
    <property type="entry name" value="Plant_O-MeTrfase_dimerisation"/>
</dbReference>
<dbReference type="InterPro" id="IPR029063">
    <property type="entry name" value="SAM-dependent_MTases_sf"/>
</dbReference>
<dbReference type="InterPro" id="IPR036388">
    <property type="entry name" value="WH-like_DNA-bd_sf"/>
</dbReference>
<dbReference type="InterPro" id="IPR036390">
    <property type="entry name" value="WH_DNA-bd_sf"/>
</dbReference>
<dbReference type="PANTHER" id="PTHR11746">
    <property type="entry name" value="O-METHYLTRANSFERASE"/>
    <property type="match status" value="1"/>
</dbReference>
<dbReference type="Pfam" id="PF08100">
    <property type="entry name" value="Dimerisation"/>
    <property type="match status" value="1"/>
</dbReference>
<dbReference type="Pfam" id="PF00891">
    <property type="entry name" value="Methyltransf_2"/>
    <property type="match status" value="1"/>
</dbReference>
<dbReference type="PIRSF" id="PIRSF005739">
    <property type="entry name" value="O-mtase"/>
    <property type="match status" value="1"/>
</dbReference>
<dbReference type="SUPFAM" id="SSF53335">
    <property type="entry name" value="S-adenosyl-L-methionine-dependent methyltransferases"/>
    <property type="match status" value="1"/>
</dbReference>
<dbReference type="SUPFAM" id="SSF46785">
    <property type="entry name" value="Winged helix' DNA-binding domain"/>
    <property type="match status" value="1"/>
</dbReference>
<dbReference type="PROSITE" id="PS51683">
    <property type="entry name" value="SAM_OMT_II"/>
    <property type="match status" value="1"/>
</dbReference>
<sequence length="364" mass="39553">MGSTAGDVAAVVDEEACMYAMQLASSSILPMTLKNAIELGLLEVLQKEAGGGKAALAPEEVVARMPAAPGDPAAAAAMVDRMLRLLASYDVVRCQMEDRDGRYERRYSAAPVCKWLTPNEDGVSMAALALMNQDKVLMESWYYLKDAVLDGGIPFNKAYGMTAFEYHGTDSRFNRVFNEGMKNHSVIITKKLLDFYTGFEGVSTLVDVGGGVGATLHAITSRHPHISGVNFDLPHVISEAPPFPGVRHVGGDMFASVPAGDAILMKWILHDWSDAHCATLLKNCYDALPENGKVIVVECVLPVNTEATPKAQGVFHVDMIMLAHNPGGKERYEREFRELAKGAGFSGFKATYIYANAWAIEFIK</sequence>
<protein>
    <recommendedName>
        <fullName evidence="6">Caffeic acid 3-O-methyltransferase</fullName>
        <shortName>CAOMT</shortName>
        <shortName evidence="6">COMT</shortName>
        <ecNumber evidence="2">2.1.1.68</ecNumber>
    </recommendedName>
    <alternativeName>
        <fullName evidence="7">Flavone 3'-O-methyltransferase 1</fullName>
        <shortName evidence="7">ZmOMT1</shortName>
    </alternativeName>
    <alternativeName>
        <fullName>S-adenosysl-L-methionine:caffeic acid 3-O-methyltransferase</fullName>
    </alternativeName>
    <alternativeName>
        <fullName evidence="7">Tricin synthase</fullName>
        <ecNumber evidence="5">2.1.1.175</ecNumber>
    </alternativeName>
</protein>
<comment type="function">
    <text evidence="2 4 5">Catalyzes the conversion of caffeic acid to ferulic acid and of 5-hydroxyferulic acid to sinapic acid (By similarity). The resulting products may subsequently be converted to the corresponding alcohols that are incorporated into lignins (PubMed:16941210). Can use the flavone tricetin (5,7,3',4',5'-pentahydroxyflavone) as the preferred substrate and give rise to its 3',5'-dimethyl derivative, tricin (3',5'-dimethoxy-5,7,4'-trihydroxyflavone), as the major product, and selgin to a lower extent (Ref.3). Tricin exhibits potential benefits for human health including relaxant effect on smooth muscle of intestinal tissues, antioxidant effect, antihistaminic activity, and growth inhibition of human malignant breast tumor cells and colon cancer cells (Ref.3). Can also use luteolin, quercetin and 5-hydroxyferulic acid (5HF) as substrates (Ref.3).</text>
</comment>
<comment type="catalytic activity">
    <reaction evidence="2">
        <text>(E)-caffeate + S-adenosyl-L-methionine = (E)-ferulate + S-adenosyl-L-homocysteine + H(+)</text>
        <dbReference type="Rhea" id="RHEA:20225"/>
        <dbReference type="ChEBI" id="CHEBI:15378"/>
        <dbReference type="ChEBI" id="CHEBI:29749"/>
        <dbReference type="ChEBI" id="CHEBI:57770"/>
        <dbReference type="ChEBI" id="CHEBI:57856"/>
        <dbReference type="ChEBI" id="CHEBI:59789"/>
        <dbReference type="EC" id="2.1.1.68"/>
    </reaction>
</comment>
<comment type="catalytic activity">
    <reaction evidence="5">
        <text>tricetin + 2 S-adenosyl-L-methionine = 3',5'-di-O-methyltricetin + 2 S-adenosyl-L-homocysteine + 2 H(+)</text>
        <dbReference type="Rhea" id="RHEA:32347"/>
        <dbReference type="ChEBI" id="CHEBI:15378"/>
        <dbReference type="ChEBI" id="CHEBI:57856"/>
        <dbReference type="ChEBI" id="CHEBI:59789"/>
        <dbReference type="ChEBI" id="CHEBI:60016"/>
        <dbReference type="ChEBI" id="CHEBI:60045"/>
        <dbReference type="EC" id="2.1.1.175"/>
    </reaction>
    <physiologicalReaction direction="left-to-right" evidence="9">
        <dbReference type="Rhea" id="RHEA:32348"/>
    </physiologicalReaction>
</comment>
<comment type="catalytic activity">
    <reaction evidence="5">
        <text>luteolin + S-adenosyl-L-methionine = chrysoeriol + S-adenosyl-L-homocysteine + H(+)</text>
        <dbReference type="Rhea" id="RHEA:14589"/>
        <dbReference type="ChEBI" id="CHEBI:15378"/>
        <dbReference type="ChEBI" id="CHEBI:57545"/>
        <dbReference type="ChEBI" id="CHEBI:57799"/>
        <dbReference type="ChEBI" id="CHEBI:57856"/>
        <dbReference type="ChEBI" id="CHEBI:59789"/>
    </reaction>
    <physiologicalReaction direction="left-to-right" evidence="9">
        <dbReference type="Rhea" id="RHEA:14590"/>
    </physiologicalReaction>
</comment>
<comment type="catalytic activity">
    <reaction evidence="5">
        <text>tricetin + S-adenosyl-L-methionine = 3'-O-methyltricetin + S-adenosyl-L-homocysteine + H(+)</text>
        <dbReference type="Rhea" id="RHEA:27493"/>
        <dbReference type="ChEBI" id="CHEBI:15378"/>
        <dbReference type="ChEBI" id="CHEBI:57856"/>
        <dbReference type="ChEBI" id="CHEBI:59789"/>
        <dbReference type="ChEBI" id="CHEBI:60014"/>
        <dbReference type="ChEBI" id="CHEBI:60045"/>
    </reaction>
    <physiologicalReaction direction="left-to-right" evidence="9">
        <dbReference type="Rhea" id="RHEA:27494"/>
    </physiologicalReaction>
</comment>
<comment type="biophysicochemical properties">
    <kinetics>
        <KM evidence="5">4.17 uM for tricetin</KM>
        <KM evidence="5">15.92 uM for luteolin</KM>
        <Vmax evidence="5">3.14 pmol/sec/mg enzyme with tricetin as substrate</Vmax>
        <Vmax evidence="5">22.47 pmol/sec/mg enzyme with luteolin as substrate</Vmax>
    </kinetics>
    <phDependence>
        <text evidence="5">Optimum pH is 7.5.</text>
    </phDependence>
</comment>
<comment type="pathway">
    <text evidence="2">Aromatic compound metabolism; phenylpropanoid biosynthesis.</text>
</comment>
<comment type="subunit">
    <text evidence="2">Homodimer.</text>
</comment>
<comment type="tissue specificity">
    <text evidence="4">Confined to the vascular tissues of organs undergoing lignification such as stems and roots.</text>
</comment>
<comment type="induction">
    <text evidence="4">Induced transiently by wounding in vascular tissues, before being repressed by MYB31 and MYB42.</text>
</comment>
<comment type="similarity">
    <text evidence="3">Belongs to the class I-like SAM-binding methyltransferase superfamily. Cation-independent O-methyltransferase family. COMT subfamily.</text>
</comment>
<feature type="chain" id="PRO_0000063203" description="Caffeic acid 3-O-methyltransferase">
    <location>
        <begin position="1"/>
        <end position="364"/>
    </location>
</feature>
<feature type="region of interest" description="Substrate binding" evidence="1">
    <location>
        <begin position="163"/>
        <end position="181"/>
    </location>
</feature>
<feature type="active site" description="Proton acceptor" evidence="3">
    <location>
        <position position="270"/>
    </location>
</feature>
<feature type="binding site" evidence="1">
    <location>
        <begin position="131"/>
        <end position="137"/>
    </location>
    <ligand>
        <name>substrate</name>
    </ligand>
</feature>
<feature type="binding site" evidence="3">
    <location>
        <position position="209"/>
    </location>
    <ligand>
        <name>S-adenosyl-L-methionine</name>
        <dbReference type="ChEBI" id="CHEBI:59789"/>
    </ligand>
</feature>
<feature type="binding site" evidence="3">
    <location>
        <position position="232"/>
    </location>
    <ligand>
        <name>S-adenosyl-L-methionine</name>
        <dbReference type="ChEBI" id="CHEBI:59789"/>
    </ligand>
</feature>
<feature type="binding site" evidence="3">
    <location>
        <position position="252"/>
    </location>
    <ligand>
        <name>S-adenosyl-L-methionine</name>
        <dbReference type="ChEBI" id="CHEBI:59789"/>
    </ligand>
</feature>
<feature type="binding site" evidence="3">
    <location>
        <position position="253"/>
    </location>
    <ligand>
        <name>S-adenosyl-L-methionine</name>
        <dbReference type="ChEBI" id="CHEBI:59789"/>
    </ligand>
</feature>
<feature type="binding site" evidence="3">
    <location>
        <position position="266"/>
    </location>
    <ligand>
        <name>S-adenosyl-L-methionine</name>
        <dbReference type="ChEBI" id="CHEBI:59789"/>
    </ligand>
</feature>
<feature type="sequence conflict" description="In Ref. 1; AAB03364." evidence="8" ref="1">
    <original>G</original>
    <variation>S</variation>
    <location>
        <position position="70"/>
    </location>
</feature>
<feature type="sequence conflict" description="In Ref. 1; AAB03364." evidence="8" ref="1">
    <original>S</original>
    <variation>A</variation>
    <location>
        <position position="171"/>
    </location>
</feature>
<gene>
    <name evidence="6" type="primary">COMT</name>
    <name evidence="10" type="ORF">ZEAMMB73_Zm00001d049541</name>
</gene>
<keyword id="KW-0438">Lignin biosynthesis</keyword>
<keyword id="KW-0489">Methyltransferase</keyword>
<keyword id="KW-1185">Reference proteome</keyword>
<keyword id="KW-0949">S-adenosyl-L-methionine</keyword>
<keyword id="KW-0808">Transferase</keyword>
<reference key="1">
    <citation type="journal article" date="1992" name="Plant Mol. Biol.">
        <title>Structure and expression of the lignin O-methyltransferase gene from Zea mays L.</title>
        <authorList>
            <person name="Collazo P."/>
            <person name="Montoliu L."/>
            <person name="Puigdomenech P."/>
            <person name="Rigau J."/>
        </authorList>
    </citation>
    <scope>NUCLEOTIDE SEQUENCE [GENOMIC DNA]</scope>
</reference>
<reference key="2">
    <citation type="journal article" date="2004" name="Theor. Appl. Genet.">
        <title>Genetic diversity associated with variation in silage corn digestibility for three O-methyltransferase genes involved in lignin biosynthesis.</title>
        <authorList>
            <person name="Guillet-Claude C."/>
            <person name="Birolleau-Touchard C."/>
            <person name="Manicacci D."/>
            <person name="Fourmann M."/>
            <person name="Barraud S."/>
            <person name="Carret V."/>
            <person name="Martinant J.P."/>
            <person name="Barriere Y."/>
        </authorList>
    </citation>
    <scope>NUCLEOTIDE SEQUENCE [GENOMIC DNA]</scope>
</reference>
<reference key="3">
    <citation type="journal article" date="2008" name="Pharm. Biol.">
        <title>Characterization of two O-methyltransferase-like genes in barley and maize.</title>
        <authorList>
            <person name="Zhou J.-M."/>
            <person name="Fukushi Y."/>
            <person name="Wollenweber E."/>
            <person name="Ibrahim R.K."/>
        </authorList>
    </citation>
    <scope>NUCLEOTIDE SEQUENCE [MRNA]</scope>
    <scope>FUNCTION</scope>
    <scope>CATALYTIC ACTIVITY</scope>
    <scope>BIOPHYSICOCHEMICAL PROPERTIES</scope>
</reference>
<reference key="4">
    <citation type="journal article" date="2009" name="Science">
        <title>The B73 maize genome: complexity, diversity, and dynamics.</title>
        <authorList>
            <person name="Schnable P.S."/>
            <person name="Ware D."/>
            <person name="Fulton R.S."/>
            <person name="Stein J.C."/>
            <person name="Wei F."/>
            <person name="Pasternak S."/>
            <person name="Liang C."/>
            <person name="Zhang J."/>
            <person name="Fulton L."/>
            <person name="Graves T.A."/>
            <person name="Minx P."/>
            <person name="Reily A.D."/>
            <person name="Courtney L."/>
            <person name="Kruchowski S.S."/>
            <person name="Tomlinson C."/>
            <person name="Strong C."/>
            <person name="Delehaunty K."/>
            <person name="Fronick C."/>
            <person name="Courtney B."/>
            <person name="Rock S.M."/>
            <person name="Belter E."/>
            <person name="Du F."/>
            <person name="Kim K."/>
            <person name="Abbott R.M."/>
            <person name="Cotton M."/>
            <person name="Levy A."/>
            <person name="Marchetto P."/>
            <person name="Ochoa K."/>
            <person name="Jackson S.M."/>
            <person name="Gillam B."/>
            <person name="Chen W."/>
            <person name="Yan L."/>
            <person name="Higginbotham J."/>
            <person name="Cardenas M."/>
            <person name="Waligorski J."/>
            <person name="Applebaum E."/>
            <person name="Phelps L."/>
            <person name="Falcone J."/>
            <person name="Kanchi K."/>
            <person name="Thane T."/>
            <person name="Scimone A."/>
            <person name="Thane N."/>
            <person name="Henke J."/>
            <person name="Wang T."/>
            <person name="Ruppert J."/>
            <person name="Shah N."/>
            <person name="Rotter K."/>
            <person name="Hodges J."/>
            <person name="Ingenthron E."/>
            <person name="Cordes M."/>
            <person name="Kohlberg S."/>
            <person name="Sgro J."/>
            <person name="Delgado B."/>
            <person name="Mead K."/>
            <person name="Chinwalla A."/>
            <person name="Leonard S."/>
            <person name="Crouse K."/>
            <person name="Collura K."/>
            <person name="Kudrna D."/>
            <person name="Currie J."/>
            <person name="He R."/>
            <person name="Angelova A."/>
            <person name="Rajasekar S."/>
            <person name="Mueller T."/>
            <person name="Lomeli R."/>
            <person name="Scara G."/>
            <person name="Ko A."/>
            <person name="Delaney K."/>
            <person name="Wissotski M."/>
            <person name="Lopez G."/>
            <person name="Campos D."/>
            <person name="Braidotti M."/>
            <person name="Ashley E."/>
            <person name="Golser W."/>
            <person name="Kim H."/>
            <person name="Lee S."/>
            <person name="Lin J."/>
            <person name="Dujmic Z."/>
            <person name="Kim W."/>
            <person name="Talag J."/>
            <person name="Zuccolo A."/>
            <person name="Fan C."/>
            <person name="Sebastian A."/>
            <person name="Kramer M."/>
            <person name="Spiegel L."/>
            <person name="Nascimento L."/>
            <person name="Zutavern T."/>
            <person name="Miller B."/>
            <person name="Ambroise C."/>
            <person name="Muller S."/>
            <person name="Spooner W."/>
            <person name="Narechania A."/>
            <person name="Ren L."/>
            <person name="Wei S."/>
            <person name="Kumari S."/>
            <person name="Faga B."/>
            <person name="Levy M.J."/>
            <person name="McMahan L."/>
            <person name="Van Buren P."/>
            <person name="Vaughn M.W."/>
            <person name="Ying K."/>
            <person name="Yeh C.-T."/>
            <person name="Emrich S.J."/>
            <person name="Jia Y."/>
            <person name="Kalyanaraman A."/>
            <person name="Hsia A.-P."/>
            <person name="Barbazuk W.B."/>
            <person name="Baucom R.S."/>
            <person name="Brutnell T.P."/>
            <person name="Carpita N.C."/>
            <person name="Chaparro C."/>
            <person name="Chia J.-M."/>
            <person name="Deragon J.-M."/>
            <person name="Estill J.C."/>
            <person name="Fu Y."/>
            <person name="Jeddeloh J.A."/>
            <person name="Han Y."/>
            <person name="Lee H."/>
            <person name="Li P."/>
            <person name="Lisch D.R."/>
            <person name="Liu S."/>
            <person name="Liu Z."/>
            <person name="Nagel D.H."/>
            <person name="McCann M.C."/>
            <person name="SanMiguel P."/>
            <person name="Myers A.M."/>
            <person name="Nettleton D."/>
            <person name="Nguyen J."/>
            <person name="Penning B.W."/>
            <person name="Ponnala L."/>
            <person name="Schneider K.L."/>
            <person name="Schwartz D.C."/>
            <person name="Sharma A."/>
            <person name="Soderlund C."/>
            <person name="Springer N.M."/>
            <person name="Sun Q."/>
            <person name="Wang H."/>
            <person name="Waterman M."/>
            <person name="Westerman R."/>
            <person name="Wolfgruber T.K."/>
            <person name="Yang L."/>
            <person name="Yu Y."/>
            <person name="Zhang L."/>
            <person name="Zhou S."/>
            <person name="Zhu Q."/>
            <person name="Bennetzen J.L."/>
            <person name="Dawe R.K."/>
            <person name="Jiang J."/>
            <person name="Jiang N."/>
            <person name="Presting G.G."/>
            <person name="Wessler S.R."/>
            <person name="Aluru S."/>
            <person name="Martienssen R.A."/>
            <person name="Clifton S.W."/>
            <person name="McCombie W.R."/>
            <person name="Wing R.A."/>
            <person name="Wilson R.K."/>
        </authorList>
    </citation>
    <scope>NUCLEOTIDE SEQUENCE [LARGE SCALE GENOMIC DNA]</scope>
    <source>
        <strain>cv. B73</strain>
    </source>
</reference>
<reference key="5">
    <citation type="journal article" date="2006" name="Plant Mol. Biol.">
        <title>Down-regulation of the maize and Arabidopsis thaliana caffeic acid O-methyl-transferase genes by two new maize R2R3-MYB transcription factors.</title>
        <authorList>
            <person name="Fornale S."/>
            <person name="Sonbol F.-M."/>
            <person name="Maes T."/>
            <person name="Capellades M."/>
            <person name="Puigdomenech P."/>
            <person name="Rigau J."/>
            <person name="Caparros-Ruiz D."/>
        </authorList>
    </citation>
    <scope>FUNCTION</scope>
    <scope>INDUCTION BY WOUNDING</scope>
    <scope>TISSUE SPECIFICITY</scope>
    <source>
        <strain>cv. Wisconsin 64A</strain>
        <tissue>Root</tissue>
    </source>
</reference>
<evidence type="ECO:0000250" key="1"/>
<evidence type="ECO:0000250" key="2">
    <source>
        <dbReference type="UniProtKB" id="P28002"/>
    </source>
</evidence>
<evidence type="ECO:0000255" key="3">
    <source>
        <dbReference type="PROSITE-ProRule" id="PRU01020"/>
    </source>
</evidence>
<evidence type="ECO:0000269" key="4">
    <source>
    </source>
</evidence>
<evidence type="ECO:0000269" key="5">
    <source ref="3"/>
</evidence>
<evidence type="ECO:0000303" key="6">
    <source>
    </source>
</evidence>
<evidence type="ECO:0000303" key="7">
    <source ref="3"/>
</evidence>
<evidence type="ECO:0000305" key="8"/>
<evidence type="ECO:0000305" key="9">
    <source ref="3"/>
</evidence>
<evidence type="ECO:0000312" key="10">
    <source>
        <dbReference type="EMBL" id="AQK50725.1"/>
    </source>
</evidence>
<proteinExistence type="evidence at protein level"/>
<name>COMT1_MAIZE</name>